<feature type="chain" id="PRO_0000134848" description="6,7-dimethyl-8-ribityllumazine synthase">
    <location>
        <begin position="1"/>
        <end position="136"/>
    </location>
</feature>
<feature type="active site" description="Proton donor" evidence="1">
    <location>
        <position position="75"/>
    </location>
</feature>
<feature type="binding site" evidence="1">
    <location>
        <position position="11"/>
    </location>
    <ligand>
        <name>5-amino-6-(D-ribitylamino)uracil</name>
        <dbReference type="ChEBI" id="CHEBI:15934"/>
    </ligand>
</feature>
<feature type="binding site" evidence="1">
    <location>
        <begin position="43"/>
        <end position="45"/>
    </location>
    <ligand>
        <name>5-amino-6-(D-ribitylamino)uracil</name>
        <dbReference type="ChEBI" id="CHEBI:15934"/>
    </ligand>
</feature>
<feature type="binding site" evidence="1">
    <location>
        <begin position="67"/>
        <end position="69"/>
    </location>
    <ligand>
        <name>5-amino-6-(D-ribitylamino)uracil</name>
        <dbReference type="ChEBI" id="CHEBI:15934"/>
    </ligand>
</feature>
<feature type="binding site" evidence="1">
    <location>
        <begin position="72"/>
        <end position="73"/>
    </location>
    <ligand>
        <name>(2S)-2-hydroxy-3-oxobutyl phosphate</name>
        <dbReference type="ChEBI" id="CHEBI:58830"/>
    </ligand>
</feature>
<feature type="binding site" evidence="1">
    <location>
        <position position="100"/>
    </location>
    <ligand>
        <name>5-amino-6-(D-ribitylamino)uracil</name>
        <dbReference type="ChEBI" id="CHEBI:15934"/>
    </ligand>
</feature>
<feature type="binding site" evidence="1">
    <location>
        <position position="115"/>
    </location>
    <ligand>
        <name>(2S)-2-hydroxy-3-oxobutyl phosphate</name>
        <dbReference type="ChEBI" id="CHEBI:58830"/>
    </ligand>
</feature>
<keyword id="KW-0686">Riboflavin biosynthesis</keyword>
<keyword id="KW-0808">Transferase</keyword>
<gene>
    <name evidence="1" type="primary">ribH</name>
    <name type="ordered locus">PTO0714</name>
</gene>
<name>RISB_PICTO</name>
<protein>
    <recommendedName>
        <fullName evidence="1">6,7-dimethyl-8-ribityllumazine synthase</fullName>
        <shortName evidence="1">DMRL synthase</shortName>
        <shortName evidence="1">LS</shortName>
        <shortName evidence="1">Lumazine synthase</shortName>
        <ecNumber evidence="1">2.5.1.78</ecNumber>
    </recommendedName>
</protein>
<sequence length="136" mass="15150">MIRIGMVVAEFNYDITMMMLERARSYAEFLGVEVHKILRVPGSFDMPLAIKKLLMDNDIDGVVTIGAVIKGETDHHKIIMDNVSRKITDLSLEYNKPVALGISGPGESRLQAEARIDMAKEAVESCVKMIKLLKSN</sequence>
<proteinExistence type="inferred from homology"/>
<comment type="function">
    <text evidence="1">Catalyzes the formation of 6,7-dimethyl-8-ribityllumazine by condensation of 5-amino-6-(D-ribitylamino)uracil with 3,4-dihydroxy-2-butanone 4-phosphate. This is the penultimate step in the biosynthesis of riboflavin.</text>
</comment>
<comment type="catalytic activity">
    <reaction evidence="1">
        <text>(2S)-2-hydroxy-3-oxobutyl phosphate + 5-amino-6-(D-ribitylamino)uracil = 6,7-dimethyl-8-(1-D-ribityl)lumazine + phosphate + 2 H2O + H(+)</text>
        <dbReference type="Rhea" id="RHEA:26152"/>
        <dbReference type="ChEBI" id="CHEBI:15377"/>
        <dbReference type="ChEBI" id="CHEBI:15378"/>
        <dbReference type="ChEBI" id="CHEBI:15934"/>
        <dbReference type="ChEBI" id="CHEBI:43474"/>
        <dbReference type="ChEBI" id="CHEBI:58201"/>
        <dbReference type="ChEBI" id="CHEBI:58830"/>
        <dbReference type="EC" id="2.5.1.78"/>
    </reaction>
</comment>
<comment type="pathway">
    <text evidence="1">Cofactor biosynthesis; riboflavin biosynthesis; riboflavin from 2-hydroxy-3-oxobutyl phosphate and 5-amino-6-(D-ribitylamino)uracil: step 1/2.</text>
</comment>
<comment type="similarity">
    <text evidence="1">Belongs to the DMRL synthase family.</text>
</comment>
<dbReference type="EC" id="2.5.1.78" evidence="1"/>
<dbReference type="EMBL" id="AE017261">
    <property type="protein sequence ID" value="AAT43299.1"/>
    <property type="molecule type" value="Genomic_DNA"/>
</dbReference>
<dbReference type="RefSeq" id="WP_011177515.1">
    <property type="nucleotide sequence ID" value="NC_005877.1"/>
</dbReference>
<dbReference type="SMR" id="Q6L153"/>
<dbReference type="FunCoup" id="Q6L153">
    <property type="interactions" value="105"/>
</dbReference>
<dbReference type="STRING" id="263820.PTO0714"/>
<dbReference type="PaxDb" id="263820-PTO0714"/>
<dbReference type="GeneID" id="2845293"/>
<dbReference type="KEGG" id="pto:PTO0714"/>
<dbReference type="PATRIC" id="fig|263820.9.peg.749"/>
<dbReference type="eggNOG" id="arCOG01323">
    <property type="taxonomic scope" value="Archaea"/>
</dbReference>
<dbReference type="HOGENOM" id="CLU_089358_3_1_2"/>
<dbReference type="InParanoid" id="Q6L153"/>
<dbReference type="OrthoDB" id="7610at2157"/>
<dbReference type="UniPathway" id="UPA00275">
    <property type="reaction ID" value="UER00404"/>
</dbReference>
<dbReference type="Proteomes" id="UP000000438">
    <property type="component" value="Chromosome"/>
</dbReference>
<dbReference type="GO" id="GO:0009349">
    <property type="term" value="C:riboflavin synthase complex"/>
    <property type="evidence" value="ECO:0007669"/>
    <property type="project" value="InterPro"/>
</dbReference>
<dbReference type="GO" id="GO:0000906">
    <property type="term" value="F:6,7-dimethyl-8-ribityllumazine synthase activity"/>
    <property type="evidence" value="ECO:0007669"/>
    <property type="project" value="UniProtKB-UniRule"/>
</dbReference>
<dbReference type="GO" id="GO:0009231">
    <property type="term" value="P:riboflavin biosynthetic process"/>
    <property type="evidence" value="ECO:0007669"/>
    <property type="project" value="UniProtKB-UniRule"/>
</dbReference>
<dbReference type="CDD" id="cd09211">
    <property type="entry name" value="Lumazine_synthase_archaeal"/>
    <property type="match status" value="1"/>
</dbReference>
<dbReference type="FunFam" id="3.40.50.960:FF:000003">
    <property type="entry name" value="6,7-dimethyl-8-ribityllumazine synthase"/>
    <property type="match status" value="1"/>
</dbReference>
<dbReference type="Gene3D" id="3.40.50.960">
    <property type="entry name" value="Lumazine/riboflavin synthase"/>
    <property type="match status" value="1"/>
</dbReference>
<dbReference type="HAMAP" id="MF_00178">
    <property type="entry name" value="Lumazine_synth"/>
    <property type="match status" value="1"/>
</dbReference>
<dbReference type="InterPro" id="IPR034964">
    <property type="entry name" value="LS"/>
</dbReference>
<dbReference type="InterPro" id="IPR002180">
    <property type="entry name" value="LS/RS"/>
</dbReference>
<dbReference type="InterPro" id="IPR036467">
    <property type="entry name" value="LS/RS_sf"/>
</dbReference>
<dbReference type="NCBIfam" id="TIGR00114">
    <property type="entry name" value="lumazine-synth"/>
    <property type="match status" value="1"/>
</dbReference>
<dbReference type="PANTHER" id="PTHR21058:SF0">
    <property type="entry name" value="6,7-DIMETHYL-8-RIBITYLLUMAZINE SYNTHASE"/>
    <property type="match status" value="1"/>
</dbReference>
<dbReference type="PANTHER" id="PTHR21058">
    <property type="entry name" value="6,7-DIMETHYL-8-RIBITYLLUMAZINE SYNTHASE DMRL SYNTHASE LUMAZINE SYNTHASE"/>
    <property type="match status" value="1"/>
</dbReference>
<dbReference type="Pfam" id="PF00885">
    <property type="entry name" value="DMRL_synthase"/>
    <property type="match status" value="1"/>
</dbReference>
<dbReference type="SUPFAM" id="SSF52121">
    <property type="entry name" value="Lumazine synthase"/>
    <property type="match status" value="1"/>
</dbReference>
<accession>Q6L153</accession>
<organism>
    <name type="scientific">Picrophilus torridus (strain ATCC 700027 / DSM 9790 / JCM 10055 / NBRC 100828 / KAW 2/3)</name>
    <dbReference type="NCBI Taxonomy" id="1122961"/>
    <lineage>
        <taxon>Archaea</taxon>
        <taxon>Methanobacteriati</taxon>
        <taxon>Thermoplasmatota</taxon>
        <taxon>Thermoplasmata</taxon>
        <taxon>Thermoplasmatales</taxon>
        <taxon>Picrophilaceae</taxon>
        <taxon>Picrophilus</taxon>
    </lineage>
</organism>
<evidence type="ECO:0000255" key="1">
    <source>
        <dbReference type="HAMAP-Rule" id="MF_00178"/>
    </source>
</evidence>
<reference key="1">
    <citation type="journal article" date="2004" name="Proc. Natl. Acad. Sci. U.S.A.">
        <title>Genome sequence of Picrophilus torridus and its implications for life around pH 0.</title>
        <authorList>
            <person name="Fuetterer O."/>
            <person name="Angelov A."/>
            <person name="Liesegang H."/>
            <person name="Gottschalk G."/>
            <person name="Schleper C."/>
            <person name="Schepers B."/>
            <person name="Dock C."/>
            <person name="Antranikian G."/>
            <person name="Liebl W."/>
        </authorList>
    </citation>
    <scope>NUCLEOTIDE SEQUENCE [LARGE SCALE GENOMIC DNA]</scope>
    <source>
        <strain>ATCC 700027 / DSM 9790 / JCM 10055 / NBRC 100828 / KAW 2/3</strain>
    </source>
</reference>